<comment type="function">
    <text evidence="1">Catalyzes the NAD-dependent oxidative cleavage of spermidine and the subsequent transfer of the butylamine moiety of spermidine to the epsilon-amino group of a specific lysine residue of the eIF-5A precursor protein to form the intermediate deoxyhypusine residue. Also able to produce homospermidine from putrescine (By similarity).</text>
</comment>
<comment type="catalytic activity">
    <reaction>
        <text>[eIF5A protein]-L-lysine + spermidine = [eIF5A protein]-deoxyhypusine + propane-1,3-diamine</text>
        <dbReference type="Rhea" id="RHEA:33299"/>
        <dbReference type="Rhea" id="RHEA-COMP:10143"/>
        <dbReference type="Rhea" id="RHEA-COMP:10144"/>
        <dbReference type="ChEBI" id="CHEBI:29969"/>
        <dbReference type="ChEBI" id="CHEBI:57484"/>
        <dbReference type="ChEBI" id="CHEBI:57834"/>
        <dbReference type="ChEBI" id="CHEBI:82657"/>
        <dbReference type="EC" id="2.5.1.46"/>
    </reaction>
</comment>
<comment type="cofactor">
    <cofactor>
        <name>NAD(+)</name>
        <dbReference type="ChEBI" id="CHEBI:57540"/>
    </cofactor>
</comment>
<comment type="pathway">
    <text>Protein modification; eIF5A hypusination.</text>
</comment>
<comment type="alternative products">
    <event type="alternative splicing"/>
    <isoform>
        <id>Q9FI94-1</id>
        <name>1</name>
        <sequence type="displayed"/>
    </isoform>
    <text>A number of isoforms are produced. According to EST sequences.</text>
</comment>
<comment type="similarity">
    <text evidence="2">Belongs to the deoxyhypusine synthase family.</text>
</comment>
<comment type="sequence caution" evidence="2">
    <conflict type="frameshift">
        <sequence resource="EMBL-CDS" id="AAK32840"/>
    </conflict>
</comment>
<protein>
    <recommendedName>
        <fullName>Deoxyhypusine synthase</fullName>
        <ecNumber>2.5.1.46</ecNumber>
    </recommendedName>
</protein>
<organism>
    <name type="scientific">Arabidopsis thaliana</name>
    <name type="common">Mouse-ear cress</name>
    <dbReference type="NCBI Taxonomy" id="3702"/>
    <lineage>
        <taxon>Eukaryota</taxon>
        <taxon>Viridiplantae</taxon>
        <taxon>Streptophyta</taxon>
        <taxon>Embryophyta</taxon>
        <taxon>Tracheophyta</taxon>
        <taxon>Spermatophyta</taxon>
        <taxon>Magnoliopsida</taxon>
        <taxon>eudicotyledons</taxon>
        <taxon>Gunneridae</taxon>
        <taxon>Pentapetalae</taxon>
        <taxon>rosids</taxon>
        <taxon>malvids</taxon>
        <taxon>Brassicales</taxon>
        <taxon>Brassicaceae</taxon>
        <taxon>Camelineae</taxon>
        <taxon>Arabidopsis</taxon>
    </lineage>
</organism>
<sequence length="368" mass="41064">MEDDRVFSSVHSTVFKESESLEGKCDKIEGYDFNQGVDYPKLMRSMLTTGFQASNLGEAIDVVNQMLDWRLADETTVAEDCSEEEKNPSFRESVKCKIFLGFTSNLVSSGVRDTIRYLVQHHMVDVIVTTTGGVEEDLIKCLAPTFKGDFSLPGAYLRSKGLNRIGNLLVPNDNYCKFEDWIIPIFDEMLKEQKEENVLWTPSKLLARLGKEINNESSYLYWAYKMNIPVFCPGLTDGSLGDMLYFHSFRTSGLIIDVVQDIRAMNGEAVHANPKKTGMIILGGGLPKHHICNANMMRNGADYAVFINTGQEFDGSDSGARPDEAVSWGKIRGSAKTVKVYCDATIAFPLLVAETFATKRDQTCESKT</sequence>
<proteinExistence type="evidence at transcript level"/>
<reference key="1">
    <citation type="journal article" date="2001" name="J. Biol. Chem.">
        <title>Isolation and characterization of senescence-induced cDNAs encoding deoxyhypusine synthase and eucaryotic translation initiation factor 5A from tomato.</title>
        <authorList>
            <person name="Wang T.-W."/>
            <person name="Lu L."/>
            <person name="Wang D."/>
            <person name="Thompson J.E."/>
        </authorList>
    </citation>
    <scope>NUCLEOTIDE SEQUENCE [MRNA]</scope>
    <source>
        <tissue>Leaf</tissue>
    </source>
</reference>
<reference key="2">
    <citation type="journal article" date="1999" name="DNA Res.">
        <title>Structural analysis of Arabidopsis thaliana chromosome 5. IX. Sequence features of the regions of 1,011,550 bp covered by seventeen P1 and TAC clones.</title>
        <authorList>
            <person name="Kaneko T."/>
            <person name="Katoh T."/>
            <person name="Sato S."/>
            <person name="Nakamura Y."/>
            <person name="Asamizu E."/>
            <person name="Kotani H."/>
            <person name="Miyajima N."/>
            <person name="Tabata S."/>
        </authorList>
    </citation>
    <scope>NUCLEOTIDE SEQUENCE [LARGE SCALE GENOMIC DNA]</scope>
    <source>
        <strain>cv. Columbia</strain>
    </source>
</reference>
<reference key="3">
    <citation type="journal article" date="2017" name="Plant J.">
        <title>Araport11: a complete reannotation of the Arabidopsis thaliana reference genome.</title>
        <authorList>
            <person name="Cheng C.Y."/>
            <person name="Krishnakumar V."/>
            <person name="Chan A.P."/>
            <person name="Thibaud-Nissen F."/>
            <person name="Schobel S."/>
            <person name="Town C.D."/>
        </authorList>
    </citation>
    <scope>GENOME REANNOTATION</scope>
    <source>
        <strain>cv. Columbia</strain>
    </source>
</reference>
<reference key="4">
    <citation type="journal article" date="2003" name="Science">
        <title>Empirical analysis of transcriptional activity in the Arabidopsis genome.</title>
        <authorList>
            <person name="Yamada K."/>
            <person name="Lim J."/>
            <person name="Dale J.M."/>
            <person name="Chen H."/>
            <person name="Shinn P."/>
            <person name="Palm C.J."/>
            <person name="Southwick A.M."/>
            <person name="Wu H.C."/>
            <person name="Kim C.J."/>
            <person name="Nguyen M."/>
            <person name="Pham P.K."/>
            <person name="Cheuk R.F."/>
            <person name="Karlin-Newmann G."/>
            <person name="Liu S.X."/>
            <person name="Lam B."/>
            <person name="Sakano H."/>
            <person name="Wu T."/>
            <person name="Yu G."/>
            <person name="Miranda M."/>
            <person name="Quach H.L."/>
            <person name="Tripp M."/>
            <person name="Chang C.H."/>
            <person name="Lee J.M."/>
            <person name="Toriumi M.J."/>
            <person name="Chan M.M."/>
            <person name="Tang C.C."/>
            <person name="Onodera C.S."/>
            <person name="Deng J.M."/>
            <person name="Akiyama K."/>
            <person name="Ansari Y."/>
            <person name="Arakawa T."/>
            <person name="Banh J."/>
            <person name="Banno F."/>
            <person name="Bowser L."/>
            <person name="Brooks S.Y."/>
            <person name="Carninci P."/>
            <person name="Chao Q."/>
            <person name="Choy N."/>
            <person name="Enju A."/>
            <person name="Goldsmith A.D."/>
            <person name="Gurjal M."/>
            <person name="Hansen N.F."/>
            <person name="Hayashizaki Y."/>
            <person name="Johnson-Hopson C."/>
            <person name="Hsuan V.W."/>
            <person name="Iida K."/>
            <person name="Karnes M."/>
            <person name="Khan S."/>
            <person name="Koesema E."/>
            <person name="Ishida J."/>
            <person name="Jiang P.X."/>
            <person name="Jones T."/>
            <person name="Kawai J."/>
            <person name="Kamiya A."/>
            <person name="Meyers C."/>
            <person name="Nakajima M."/>
            <person name="Narusaka M."/>
            <person name="Seki M."/>
            <person name="Sakurai T."/>
            <person name="Satou M."/>
            <person name="Tamse R."/>
            <person name="Vaysberg M."/>
            <person name="Wallender E.K."/>
            <person name="Wong C."/>
            <person name="Yamamura Y."/>
            <person name="Yuan S."/>
            <person name="Shinozaki K."/>
            <person name="Davis R.W."/>
            <person name="Theologis A."/>
            <person name="Ecker J.R."/>
        </authorList>
    </citation>
    <scope>NUCLEOTIDE SEQUENCE [LARGE SCALE MRNA]</scope>
    <source>
        <strain>cv. Columbia</strain>
    </source>
</reference>
<reference key="5">
    <citation type="submission" date="2002-03" db="EMBL/GenBank/DDBJ databases">
        <title>Full-length cDNA from Arabidopsis thaliana.</title>
        <authorList>
            <person name="Brover V.V."/>
            <person name="Troukhan M.E."/>
            <person name="Alexandrov N.A."/>
            <person name="Lu Y.-P."/>
            <person name="Flavell R.B."/>
            <person name="Feldmann K.A."/>
        </authorList>
    </citation>
    <scope>NUCLEOTIDE SEQUENCE [LARGE SCALE MRNA]</scope>
</reference>
<keyword id="KW-0025">Alternative splicing</keyword>
<keyword id="KW-0386">Hypusine biosynthesis</keyword>
<keyword id="KW-0520">NAD</keyword>
<keyword id="KW-1185">Reference proteome</keyword>
<keyword id="KW-0808">Transferase</keyword>
<accession>Q9FI94</accession>
<accession>Q9ASU5</accession>
<accession>Q9C5Y5</accession>
<dbReference type="EC" id="2.5.1.46"/>
<dbReference type="EMBL" id="AF296078">
    <property type="protein sequence ID" value="AAG53642.2"/>
    <property type="molecule type" value="mRNA"/>
</dbReference>
<dbReference type="EMBL" id="AB017060">
    <property type="protein sequence ID" value="BAB10797.1"/>
    <property type="molecule type" value="Genomic_DNA"/>
</dbReference>
<dbReference type="EMBL" id="CP002688">
    <property type="protein sequence ID" value="AED90939.1"/>
    <property type="molecule type" value="Genomic_DNA"/>
</dbReference>
<dbReference type="EMBL" id="AF361828">
    <property type="protein sequence ID" value="AAK32840.1"/>
    <property type="status" value="ALT_FRAME"/>
    <property type="molecule type" value="mRNA"/>
</dbReference>
<dbReference type="EMBL" id="AY056066">
    <property type="protein sequence ID" value="AAL06966.1"/>
    <property type="molecule type" value="mRNA"/>
</dbReference>
<dbReference type="EMBL" id="AY087829">
    <property type="protein sequence ID" value="AAM65382.1"/>
    <property type="molecule type" value="mRNA"/>
</dbReference>
<dbReference type="RefSeq" id="NP_196211.1">
    <molecule id="Q9FI94-1"/>
    <property type="nucleotide sequence ID" value="NM_120674.4"/>
</dbReference>
<dbReference type="SMR" id="Q9FI94"/>
<dbReference type="FunCoup" id="Q9FI94">
    <property type="interactions" value="3891"/>
</dbReference>
<dbReference type="STRING" id="3702.Q9FI94"/>
<dbReference type="iPTMnet" id="Q9FI94"/>
<dbReference type="PaxDb" id="3702-AT5G05920.1"/>
<dbReference type="ProteomicsDB" id="222019">
    <molecule id="Q9FI94-1"/>
</dbReference>
<dbReference type="EnsemblPlants" id="AT5G05920.1">
    <molecule id="Q9FI94-1"/>
    <property type="protein sequence ID" value="AT5G05920.1"/>
    <property type="gene ID" value="AT5G05920"/>
</dbReference>
<dbReference type="GeneID" id="830477"/>
<dbReference type="Gramene" id="AT5G05920.1">
    <molecule id="Q9FI94-1"/>
    <property type="protein sequence ID" value="AT5G05920.1"/>
    <property type="gene ID" value="AT5G05920"/>
</dbReference>
<dbReference type="KEGG" id="ath:AT5G05920"/>
<dbReference type="Araport" id="AT5G05920"/>
<dbReference type="TAIR" id="AT5G05920">
    <property type="gene designation" value="DHS"/>
</dbReference>
<dbReference type="eggNOG" id="KOG2924">
    <property type="taxonomic scope" value="Eukaryota"/>
</dbReference>
<dbReference type="HOGENOM" id="CLU_039781_0_0_1"/>
<dbReference type="InParanoid" id="Q9FI94"/>
<dbReference type="OMA" id="HSIINAN"/>
<dbReference type="PhylomeDB" id="Q9FI94"/>
<dbReference type="BioCyc" id="ARA:AT5G05920-MONOMER"/>
<dbReference type="BRENDA" id="2.5.1.46">
    <property type="organism ID" value="399"/>
</dbReference>
<dbReference type="UniPathway" id="UPA00354"/>
<dbReference type="PRO" id="PR:Q9FI94"/>
<dbReference type="Proteomes" id="UP000006548">
    <property type="component" value="Chromosome 5"/>
</dbReference>
<dbReference type="ExpressionAtlas" id="Q9FI94">
    <property type="expression patterns" value="baseline and differential"/>
</dbReference>
<dbReference type="GO" id="GO:0034038">
    <property type="term" value="F:deoxyhypusine synthase activity"/>
    <property type="evidence" value="ECO:0007669"/>
    <property type="project" value="UniProtKB-EC"/>
</dbReference>
<dbReference type="GO" id="GO:0009553">
    <property type="term" value="P:embryo sac development"/>
    <property type="evidence" value="ECO:0000315"/>
    <property type="project" value="TAIR"/>
</dbReference>
<dbReference type="FunFam" id="3.40.910.10:FF:000002">
    <property type="entry name" value="Deoxyhypusine synthase"/>
    <property type="match status" value="1"/>
</dbReference>
<dbReference type="Gene3D" id="3.40.910.10">
    <property type="entry name" value="Deoxyhypusine synthase"/>
    <property type="match status" value="1"/>
</dbReference>
<dbReference type="InterPro" id="IPR002773">
    <property type="entry name" value="Deoxyhypusine_synthase"/>
</dbReference>
<dbReference type="InterPro" id="IPR036982">
    <property type="entry name" value="Deoxyhypusine_synthase_sf"/>
</dbReference>
<dbReference type="InterPro" id="IPR029035">
    <property type="entry name" value="DHS-like_NAD/FAD-binding_dom"/>
</dbReference>
<dbReference type="NCBIfam" id="TIGR00321">
    <property type="entry name" value="dhys"/>
    <property type="match status" value="1"/>
</dbReference>
<dbReference type="PANTHER" id="PTHR11703">
    <property type="entry name" value="DEOXYHYPUSINE SYNTHASE"/>
    <property type="match status" value="1"/>
</dbReference>
<dbReference type="PANTHER" id="PTHR11703:SF0">
    <property type="entry name" value="DEOXYHYPUSINE SYNTHASE"/>
    <property type="match status" value="1"/>
</dbReference>
<dbReference type="Pfam" id="PF01916">
    <property type="entry name" value="DS"/>
    <property type="match status" value="1"/>
</dbReference>
<dbReference type="SUPFAM" id="SSF52467">
    <property type="entry name" value="DHS-like NAD/FAD-binding domain"/>
    <property type="match status" value="1"/>
</dbReference>
<evidence type="ECO:0000250" key="1"/>
<evidence type="ECO:0000305" key="2"/>
<name>DHYS_ARATH</name>
<gene>
    <name type="primary">DHS</name>
    <name type="ordered locus">At5g05920</name>
    <name type="ORF">K18J17_7</name>
</gene>
<feature type="chain" id="PRO_0000134473" description="Deoxyhypusine synthase">
    <location>
        <begin position="1"/>
        <end position="368"/>
    </location>
</feature>
<feature type="active site" description="Nucleophile" evidence="1">
    <location>
        <position position="330"/>
    </location>
</feature>
<feature type="binding site" evidence="1">
    <location>
        <begin position="104"/>
        <end position="108"/>
    </location>
    <ligand>
        <name>NAD(+)</name>
        <dbReference type="ChEBI" id="CHEBI:57540"/>
    </ligand>
</feature>
<feature type="binding site" evidence="1">
    <location>
        <begin position="130"/>
        <end position="132"/>
    </location>
    <ligand>
        <name>NAD(+)</name>
        <dbReference type="ChEBI" id="CHEBI:57540"/>
    </ligand>
</feature>
<feature type="binding site" evidence="1">
    <location>
        <begin position="135"/>
        <end position="136"/>
    </location>
    <ligand>
        <name>spermidine</name>
        <dbReference type="ChEBI" id="CHEBI:57834"/>
    </ligand>
</feature>
<feature type="binding site" evidence="1">
    <location>
        <position position="136"/>
    </location>
    <ligand>
        <name>NAD(+)</name>
        <dbReference type="ChEBI" id="CHEBI:57540"/>
    </ligand>
</feature>
<feature type="binding site" evidence="1">
    <location>
        <position position="237"/>
    </location>
    <ligand>
        <name>NAD(+)</name>
        <dbReference type="ChEBI" id="CHEBI:57540"/>
    </ligand>
</feature>
<feature type="binding site" evidence="1">
    <location>
        <position position="242"/>
    </location>
    <ligand>
        <name>spermidine</name>
        <dbReference type="ChEBI" id="CHEBI:57834"/>
    </ligand>
</feature>
<feature type="binding site" evidence="1">
    <location>
        <position position="284"/>
    </location>
    <ligand>
        <name>NAD(+)</name>
        <dbReference type="ChEBI" id="CHEBI:57540"/>
    </ligand>
</feature>
<feature type="binding site" evidence="1">
    <location>
        <position position="289"/>
    </location>
    <ligand>
        <name>spermidine</name>
        <dbReference type="ChEBI" id="CHEBI:57834"/>
    </ligand>
</feature>
<feature type="binding site" evidence="1">
    <location>
        <begin position="309"/>
        <end position="310"/>
    </location>
    <ligand>
        <name>NAD(+)</name>
        <dbReference type="ChEBI" id="CHEBI:57540"/>
    </ligand>
</feature>
<feature type="binding site" evidence="1">
    <location>
        <begin position="315"/>
        <end position="317"/>
    </location>
    <ligand>
        <name>spermidine</name>
        <dbReference type="ChEBI" id="CHEBI:57834"/>
    </ligand>
</feature>
<feature type="binding site" evidence="1">
    <location>
        <begin position="324"/>
        <end position="330"/>
    </location>
    <ligand>
        <name>spermidine</name>
        <dbReference type="ChEBI" id="CHEBI:57834"/>
    </ligand>
</feature>
<feature type="binding site" evidence="1">
    <location>
        <begin position="343"/>
        <end position="344"/>
    </location>
    <ligand>
        <name>NAD(+)</name>
        <dbReference type="ChEBI" id="CHEBI:57540"/>
    </ligand>
</feature>
<feature type="sequence conflict" description="In Ref. 1; AAG53642." evidence="2" ref="1">
    <original>E</original>
    <variation>Q</variation>
    <location>
        <position position="29"/>
    </location>
</feature>
<feature type="sequence conflict" description="In Ref. 4; AAK32840." evidence="2" ref="4">
    <location>
        <position position="67"/>
    </location>
</feature>
<feature type="sequence conflict" description="In Ref. 1; AAG53642." evidence="2" ref="1">
    <original>T</original>
    <variation>P</variation>
    <location>
        <position position="309"/>
    </location>
</feature>